<keyword id="KW-0238">DNA-binding</keyword>
<keyword id="KW-0371">Homeobox</keyword>
<keyword id="KW-0539">Nucleus</keyword>
<feature type="chain" id="PRO_0000049182" description="Mating-type protein ALPHA2">
    <location>
        <begin position="1"/>
        <end position="163"/>
    </location>
</feature>
<feature type="DNA-binding region" description="Homeobox; TALE-type" evidence="1">
    <location>
        <begin position="80"/>
        <end position="142"/>
    </location>
</feature>
<name>MTAL2_PICAN</name>
<comment type="function">
    <text>Mating type proteins are sequence specific DNA-binding proteins that act as master switches in yeast differentiation by controlling gene expression in a cell type-specific fashion.</text>
</comment>
<comment type="subcellular location">
    <subcellularLocation>
        <location evidence="1">Nucleus</location>
    </subcellularLocation>
</comment>
<comment type="miscellaneous">
    <text>In P.angusta, all mating-type proteins (MATA1, MATALPHA1 and MATALPHA2) are encoded on one idiomorph, consistent with the fact that P.angusta is a homothallic haploid in which any strain can mate with any other strain.</text>
</comment>
<comment type="similarity">
    <text evidence="2">Belongs to the TALE/M-ATYP homeobox family.</text>
</comment>
<reference key="1">
    <citation type="journal article" date="2004" name="Proc. Natl. Acad. Sci. U.S.A.">
        <title>Evolution of the MAT locus and its Ho endonuclease in yeast species.</title>
        <authorList>
            <person name="Butler G."/>
            <person name="Kenny C."/>
            <person name="Fagan A."/>
            <person name="Kurischko C."/>
            <person name="Gaillardin C."/>
            <person name="Wolfe K.H."/>
        </authorList>
    </citation>
    <scope>NUCLEOTIDE SEQUENCE [GENOMIC DNA]</scope>
    <source>
        <strain>ATCC 34438 / CBS 4732 / DSM 70277 / JCM 3621 / NBRC 1476 / NRRL Y-5445</strain>
    </source>
</reference>
<dbReference type="EMBL" id="AJ617305">
    <property type="protein sequence ID" value="CAE84417.1"/>
    <property type="molecule type" value="Genomic_DNA"/>
</dbReference>
<dbReference type="SMR" id="Q707Y8"/>
<dbReference type="GO" id="GO:0005634">
    <property type="term" value="C:nucleus"/>
    <property type="evidence" value="ECO:0007669"/>
    <property type="project" value="UniProtKB-SubCell"/>
</dbReference>
<dbReference type="GO" id="GO:0003677">
    <property type="term" value="F:DNA binding"/>
    <property type="evidence" value="ECO:0007669"/>
    <property type="project" value="UniProtKB-KW"/>
</dbReference>
<dbReference type="GO" id="GO:0000981">
    <property type="term" value="F:DNA-binding transcription factor activity, RNA polymerase II-specific"/>
    <property type="evidence" value="ECO:0007669"/>
    <property type="project" value="InterPro"/>
</dbReference>
<dbReference type="CDD" id="cd00086">
    <property type="entry name" value="homeodomain"/>
    <property type="match status" value="1"/>
</dbReference>
<dbReference type="Gene3D" id="1.10.10.60">
    <property type="entry name" value="Homeodomain-like"/>
    <property type="match status" value="1"/>
</dbReference>
<dbReference type="InterPro" id="IPR001356">
    <property type="entry name" value="HD"/>
</dbReference>
<dbReference type="InterPro" id="IPR017970">
    <property type="entry name" value="Homeobox_CS"/>
</dbReference>
<dbReference type="InterPro" id="IPR009057">
    <property type="entry name" value="Homeodomain-like_sf"/>
</dbReference>
<dbReference type="InterPro" id="IPR008422">
    <property type="entry name" value="KN_HD"/>
</dbReference>
<dbReference type="Pfam" id="PF05920">
    <property type="entry name" value="Homeobox_KN"/>
    <property type="match status" value="1"/>
</dbReference>
<dbReference type="SMART" id="SM00389">
    <property type="entry name" value="HOX"/>
    <property type="match status" value="1"/>
</dbReference>
<dbReference type="SUPFAM" id="SSF46689">
    <property type="entry name" value="Homeodomain-like"/>
    <property type="match status" value="1"/>
</dbReference>
<dbReference type="PROSITE" id="PS00027">
    <property type="entry name" value="HOMEOBOX_1"/>
    <property type="match status" value="1"/>
</dbReference>
<dbReference type="PROSITE" id="PS50071">
    <property type="entry name" value="HOMEOBOX_2"/>
    <property type="match status" value="1"/>
</dbReference>
<protein>
    <recommendedName>
        <fullName>Mating-type protein ALPHA2</fullName>
    </recommendedName>
    <alternativeName>
        <fullName>MATalpha2 transcription factor</fullName>
    </alternativeName>
</protein>
<accession>Q707Y8</accession>
<sequence>MDDMLTKIQERTKCLIYILMERQIRAARLEQLLLDYISCKPHDKLCKSSMEGFTTERSLKYTRDCPQYAAVTTSQPRYRIEKRSKRFPKTAQMELENWYTENEDNPYLSKRDLQQLVHKTGLCAPQVRNWVSNRRRKERTLTISKELSDLLNQDTRCSPNDVV</sequence>
<evidence type="ECO:0000255" key="1">
    <source>
        <dbReference type="PROSITE-ProRule" id="PRU00108"/>
    </source>
</evidence>
<evidence type="ECO:0000305" key="2"/>
<proteinExistence type="inferred from homology"/>
<organism>
    <name type="scientific">Pichia angusta</name>
    <name type="common">Yeast</name>
    <name type="synonym">Hansenula polymorpha</name>
    <dbReference type="NCBI Taxonomy" id="870730"/>
    <lineage>
        <taxon>Eukaryota</taxon>
        <taxon>Fungi</taxon>
        <taxon>Dikarya</taxon>
        <taxon>Ascomycota</taxon>
        <taxon>Saccharomycotina</taxon>
        <taxon>Pichiomycetes</taxon>
        <taxon>Pichiales</taxon>
        <taxon>Pichiaceae</taxon>
        <taxon>Ogataea</taxon>
    </lineage>
</organism>
<gene>
    <name type="primary">MATALPHA2</name>
</gene>